<protein>
    <recommendedName>
        <fullName evidence="2">Purine nucleoside phosphorylase DeoD-type</fullName>
        <shortName evidence="2">PNP</shortName>
        <ecNumber evidence="2">2.4.2.1</ecNumber>
    </recommendedName>
</protein>
<proteinExistence type="inferred from homology"/>
<organism>
    <name type="scientific">Exiguobacterium sp. (strain ATCC BAA-1283 / AT1b)</name>
    <dbReference type="NCBI Taxonomy" id="360911"/>
    <lineage>
        <taxon>Bacteria</taxon>
        <taxon>Bacillati</taxon>
        <taxon>Bacillota</taxon>
        <taxon>Bacilli</taxon>
        <taxon>Bacillales</taxon>
        <taxon>Bacillales Family XII. Incertae Sedis</taxon>
        <taxon>Exiguobacterium</taxon>
    </lineage>
</organism>
<reference key="1">
    <citation type="journal article" date="2011" name="J. Bacteriol.">
        <title>Complete genome sequence of the Thermophilic Bacterium Exiguobacterium sp. AT1b.</title>
        <authorList>
            <person name="Vishnivetskaya T.A."/>
            <person name="Lucas S."/>
            <person name="Copeland A."/>
            <person name="Lapidus A."/>
            <person name="Glavina del Rio T."/>
            <person name="Dalin E."/>
            <person name="Tice H."/>
            <person name="Bruce D.C."/>
            <person name="Goodwin L.A."/>
            <person name="Pitluck S."/>
            <person name="Saunders E."/>
            <person name="Brettin T."/>
            <person name="Detter C."/>
            <person name="Han C."/>
            <person name="Larimer F."/>
            <person name="Land M.L."/>
            <person name="Hauser L.J."/>
            <person name="Kyrpides N.C."/>
            <person name="Ovchinnikova G."/>
            <person name="Kathariou S."/>
            <person name="Ramaley R.F."/>
            <person name="Rodrigues D.F."/>
            <person name="Hendrix C."/>
            <person name="Richardson P."/>
            <person name="Tiedje J.M."/>
        </authorList>
    </citation>
    <scope>NUCLEOTIDE SEQUENCE [LARGE SCALE GENOMIC DNA]</scope>
    <source>
        <strain>ATCC BAA-1283 / AT1b</strain>
    </source>
</reference>
<dbReference type="EC" id="2.4.2.1" evidence="2"/>
<dbReference type="EMBL" id="CP001615">
    <property type="protein sequence ID" value="ACQ71258.1"/>
    <property type="molecule type" value="Genomic_DNA"/>
</dbReference>
<dbReference type="RefSeq" id="WP_015880817.1">
    <property type="nucleotide sequence ID" value="NC_012673.1"/>
</dbReference>
<dbReference type="SMR" id="C4L2Y4"/>
<dbReference type="STRING" id="360911.EAT1b_2336"/>
<dbReference type="GeneID" id="94373014"/>
<dbReference type="KEGG" id="eat:EAT1b_2336"/>
<dbReference type="eggNOG" id="COG0813">
    <property type="taxonomic scope" value="Bacteria"/>
</dbReference>
<dbReference type="HOGENOM" id="CLU_068457_2_0_9"/>
<dbReference type="OrthoDB" id="9782889at2"/>
<dbReference type="Proteomes" id="UP000000716">
    <property type="component" value="Chromosome"/>
</dbReference>
<dbReference type="GO" id="GO:0005829">
    <property type="term" value="C:cytosol"/>
    <property type="evidence" value="ECO:0007669"/>
    <property type="project" value="TreeGrafter"/>
</dbReference>
<dbReference type="GO" id="GO:0004731">
    <property type="term" value="F:purine-nucleoside phosphorylase activity"/>
    <property type="evidence" value="ECO:0007669"/>
    <property type="project" value="UniProtKB-UniRule"/>
</dbReference>
<dbReference type="GO" id="GO:0006152">
    <property type="term" value="P:purine nucleoside catabolic process"/>
    <property type="evidence" value="ECO:0007669"/>
    <property type="project" value="TreeGrafter"/>
</dbReference>
<dbReference type="CDD" id="cd09006">
    <property type="entry name" value="PNP_EcPNPI-like"/>
    <property type="match status" value="1"/>
</dbReference>
<dbReference type="Gene3D" id="3.40.50.1580">
    <property type="entry name" value="Nucleoside phosphorylase domain"/>
    <property type="match status" value="1"/>
</dbReference>
<dbReference type="HAMAP" id="MF_01627">
    <property type="entry name" value="Pur_nucleosid_phosp"/>
    <property type="match status" value="1"/>
</dbReference>
<dbReference type="InterPro" id="IPR004402">
    <property type="entry name" value="DeoD-type"/>
</dbReference>
<dbReference type="InterPro" id="IPR018016">
    <property type="entry name" value="Nucleoside_phosphorylase_CS"/>
</dbReference>
<dbReference type="InterPro" id="IPR000845">
    <property type="entry name" value="Nucleoside_phosphorylase_d"/>
</dbReference>
<dbReference type="InterPro" id="IPR035994">
    <property type="entry name" value="Nucleoside_phosphorylase_sf"/>
</dbReference>
<dbReference type="NCBIfam" id="TIGR00107">
    <property type="entry name" value="deoD"/>
    <property type="match status" value="1"/>
</dbReference>
<dbReference type="NCBIfam" id="NF004489">
    <property type="entry name" value="PRK05819.1"/>
    <property type="match status" value="1"/>
</dbReference>
<dbReference type="PANTHER" id="PTHR43691:SF11">
    <property type="entry name" value="FI09636P-RELATED"/>
    <property type="match status" value="1"/>
</dbReference>
<dbReference type="PANTHER" id="PTHR43691">
    <property type="entry name" value="URIDINE PHOSPHORYLASE"/>
    <property type="match status" value="1"/>
</dbReference>
<dbReference type="Pfam" id="PF01048">
    <property type="entry name" value="PNP_UDP_1"/>
    <property type="match status" value="1"/>
</dbReference>
<dbReference type="SUPFAM" id="SSF53167">
    <property type="entry name" value="Purine and uridine phosphorylases"/>
    <property type="match status" value="1"/>
</dbReference>
<dbReference type="PROSITE" id="PS01232">
    <property type="entry name" value="PNP_UDP_1"/>
    <property type="match status" value="1"/>
</dbReference>
<gene>
    <name evidence="2" type="primary">deoD</name>
    <name type="ordered locus">EAT1b_2336</name>
</gene>
<accession>C4L2Y4</accession>
<comment type="function">
    <text evidence="2">Catalyzes the reversible phosphorolytic breakdown of the N-glycosidic bond in the beta-(deoxy)ribonucleoside molecules, with the formation of the corresponding free purine bases and pentose-1-phosphate.</text>
</comment>
<comment type="catalytic activity">
    <reaction evidence="2">
        <text>a purine D-ribonucleoside + phosphate = a purine nucleobase + alpha-D-ribose 1-phosphate</text>
        <dbReference type="Rhea" id="RHEA:19805"/>
        <dbReference type="ChEBI" id="CHEBI:26386"/>
        <dbReference type="ChEBI" id="CHEBI:43474"/>
        <dbReference type="ChEBI" id="CHEBI:57720"/>
        <dbReference type="ChEBI" id="CHEBI:142355"/>
        <dbReference type="EC" id="2.4.2.1"/>
    </reaction>
</comment>
<comment type="catalytic activity">
    <reaction evidence="2">
        <text>a purine 2'-deoxy-D-ribonucleoside + phosphate = a purine nucleobase + 2-deoxy-alpha-D-ribose 1-phosphate</text>
        <dbReference type="Rhea" id="RHEA:36431"/>
        <dbReference type="ChEBI" id="CHEBI:26386"/>
        <dbReference type="ChEBI" id="CHEBI:43474"/>
        <dbReference type="ChEBI" id="CHEBI:57259"/>
        <dbReference type="ChEBI" id="CHEBI:142361"/>
        <dbReference type="EC" id="2.4.2.1"/>
    </reaction>
</comment>
<comment type="subunit">
    <text evidence="2">Homohexamer; trimer of homodimers.</text>
</comment>
<comment type="similarity">
    <text evidence="2">Belongs to the PNP/UDP phosphorylase family.</text>
</comment>
<keyword id="KW-0328">Glycosyltransferase</keyword>
<keyword id="KW-0808">Transferase</keyword>
<sequence>MSVHIGAQEGQIAETVLLPGDPLRAKYIAETFLEDVELYNEVRGMYGFTGTYKGKRISVQGTGMGVPSMSIYVNELIMSYGAKNLIRVGTAGGIQEDVKVRDVVIAMSASSEMGQNRVRFNGMDYAPTATFDLLHRAYMNAEKAGIPVKVGQIFTADQFYQDDFHHFKKWADFGCLAIEMEAAGLYTLAAKHKVNALTILTISDHLLTGEETTSEERQSTFDEMIRVALDTAVEVTN</sequence>
<name>DEOD_EXISA</name>
<feature type="chain" id="PRO_1000215750" description="Purine nucleoside phosphorylase DeoD-type">
    <location>
        <begin position="1"/>
        <end position="237"/>
    </location>
</feature>
<feature type="active site" description="Proton donor" evidence="2">
    <location>
        <position position="204"/>
    </location>
</feature>
<feature type="binding site" evidence="1">
    <location>
        <position position="4"/>
    </location>
    <ligand>
        <name>a purine D-ribonucleoside</name>
        <dbReference type="ChEBI" id="CHEBI:142355"/>
        <note>ligand shared between dimeric partners</note>
    </ligand>
</feature>
<feature type="binding site" description="in other chain" evidence="1">
    <location>
        <position position="20"/>
    </location>
    <ligand>
        <name>phosphate</name>
        <dbReference type="ChEBI" id="CHEBI:43474"/>
        <note>ligand shared between dimeric partners</note>
    </ligand>
</feature>
<feature type="binding site" description="in other chain" evidence="1">
    <location>
        <position position="24"/>
    </location>
    <ligand>
        <name>phosphate</name>
        <dbReference type="ChEBI" id="CHEBI:43474"/>
        <note>ligand shared between dimeric partners</note>
    </ligand>
</feature>
<feature type="binding site" evidence="1">
    <location>
        <position position="43"/>
    </location>
    <ligand>
        <name>phosphate</name>
        <dbReference type="ChEBI" id="CHEBI:43474"/>
        <note>ligand shared between dimeric partners</note>
    </ligand>
</feature>
<feature type="binding site" description="in other chain" evidence="1">
    <location>
        <begin position="87"/>
        <end position="90"/>
    </location>
    <ligand>
        <name>phosphate</name>
        <dbReference type="ChEBI" id="CHEBI:43474"/>
        <note>ligand shared between dimeric partners</note>
    </ligand>
</feature>
<feature type="binding site" description="in other chain" evidence="1">
    <location>
        <begin position="179"/>
        <end position="181"/>
    </location>
    <ligand>
        <name>a purine D-ribonucleoside</name>
        <dbReference type="ChEBI" id="CHEBI:142355"/>
        <note>ligand shared between dimeric partners</note>
    </ligand>
</feature>
<feature type="binding site" description="in other chain" evidence="1">
    <location>
        <begin position="203"/>
        <end position="204"/>
    </location>
    <ligand>
        <name>a purine D-ribonucleoside</name>
        <dbReference type="ChEBI" id="CHEBI:142355"/>
        <note>ligand shared between dimeric partners</note>
    </ligand>
</feature>
<feature type="site" description="Important for catalytic activity" evidence="2">
    <location>
        <position position="217"/>
    </location>
</feature>
<evidence type="ECO:0000250" key="1">
    <source>
        <dbReference type="UniProtKB" id="P50389"/>
    </source>
</evidence>
<evidence type="ECO:0000255" key="2">
    <source>
        <dbReference type="HAMAP-Rule" id="MF_01627"/>
    </source>
</evidence>